<organism>
    <name type="scientific">Listeria monocytogenes serotype 4a (strain HCC23)</name>
    <dbReference type="NCBI Taxonomy" id="552536"/>
    <lineage>
        <taxon>Bacteria</taxon>
        <taxon>Bacillati</taxon>
        <taxon>Bacillota</taxon>
        <taxon>Bacilli</taxon>
        <taxon>Bacillales</taxon>
        <taxon>Listeriaceae</taxon>
        <taxon>Listeria</taxon>
    </lineage>
</organism>
<evidence type="ECO:0000255" key="1">
    <source>
        <dbReference type="HAMAP-Rule" id="MF_00161"/>
    </source>
</evidence>
<name>LSPA_LISMH</name>
<keyword id="KW-0064">Aspartyl protease</keyword>
<keyword id="KW-1003">Cell membrane</keyword>
<keyword id="KW-0378">Hydrolase</keyword>
<keyword id="KW-0472">Membrane</keyword>
<keyword id="KW-0645">Protease</keyword>
<keyword id="KW-0812">Transmembrane</keyword>
<keyword id="KW-1133">Transmembrane helix</keyword>
<comment type="function">
    <text evidence="1">This protein specifically catalyzes the removal of signal peptides from prolipoproteins.</text>
</comment>
<comment type="catalytic activity">
    <reaction evidence="1">
        <text>Release of signal peptides from bacterial membrane prolipoproteins. Hydrolyzes -Xaa-Yaa-Zaa-|-(S,diacylglyceryl)Cys-, in which Xaa is hydrophobic (preferably Leu), and Yaa (Ala or Ser) and Zaa (Gly or Ala) have small, neutral side chains.</text>
        <dbReference type="EC" id="3.4.23.36"/>
    </reaction>
</comment>
<comment type="pathway">
    <text evidence="1">Protein modification; lipoprotein biosynthesis (signal peptide cleavage).</text>
</comment>
<comment type="subcellular location">
    <subcellularLocation>
        <location evidence="1">Cell membrane</location>
        <topology evidence="1">Multi-pass membrane protein</topology>
    </subcellularLocation>
</comment>
<comment type="similarity">
    <text evidence="1">Belongs to the peptidase A8 family.</text>
</comment>
<dbReference type="EC" id="3.4.23.36" evidence="1"/>
<dbReference type="EMBL" id="CP001175">
    <property type="protein sequence ID" value="ACK39068.1"/>
    <property type="molecule type" value="Genomic_DNA"/>
</dbReference>
<dbReference type="RefSeq" id="WP_003729506.1">
    <property type="nucleotide sequence ID" value="NC_011660.1"/>
</dbReference>
<dbReference type="SMR" id="B8DDQ9"/>
<dbReference type="GeneID" id="93235296"/>
<dbReference type="KEGG" id="lmh:LMHCC_0713"/>
<dbReference type="HOGENOM" id="CLU_083252_3_0_9"/>
<dbReference type="UniPathway" id="UPA00665"/>
<dbReference type="GO" id="GO:0005886">
    <property type="term" value="C:plasma membrane"/>
    <property type="evidence" value="ECO:0007669"/>
    <property type="project" value="UniProtKB-SubCell"/>
</dbReference>
<dbReference type="GO" id="GO:0004190">
    <property type="term" value="F:aspartic-type endopeptidase activity"/>
    <property type="evidence" value="ECO:0007669"/>
    <property type="project" value="UniProtKB-UniRule"/>
</dbReference>
<dbReference type="GO" id="GO:0006508">
    <property type="term" value="P:proteolysis"/>
    <property type="evidence" value="ECO:0007669"/>
    <property type="project" value="UniProtKB-KW"/>
</dbReference>
<dbReference type="HAMAP" id="MF_00161">
    <property type="entry name" value="LspA"/>
    <property type="match status" value="1"/>
</dbReference>
<dbReference type="InterPro" id="IPR001872">
    <property type="entry name" value="Peptidase_A8"/>
</dbReference>
<dbReference type="NCBIfam" id="TIGR00077">
    <property type="entry name" value="lspA"/>
    <property type="match status" value="1"/>
</dbReference>
<dbReference type="PANTHER" id="PTHR33695">
    <property type="entry name" value="LIPOPROTEIN SIGNAL PEPTIDASE"/>
    <property type="match status" value="1"/>
</dbReference>
<dbReference type="PANTHER" id="PTHR33695:SF1">
    <property type="entry name" value="LIPOPROTEIN SIGNAL PEPTIDASE"/>
    <property type="match status" value="1"/>
</dbReference>
<dbReference type="Pfam" id="PF01252">
    <property type="entry name" value="Peptidase_A8"/>
    <property type="match status" value="1"/>
</dbReference>
<dbReference type="PRINTS" id="PR00781">
    <property type="entry name" value="LIPOSIGPTASE"/>
</dbReference>
<dbReference type="PROSITE" id="PS00855">
    <property type="entry name" value="SPASE_II"/>
    <property type="match status" value="1"/>
</dbReference>
<gene>
    <name evidence="1" type="primary">lspA</name>
    <name type="ordered locus">LMHCC_0713</name>
</gene>
<reference key="1">
    <citation type="journal article" date="2011" name="J. Bacteriol.">
        <title>Genome sequence of lineage III Listeria monocytogenes strain HCC23.</title>
        <authorList>
            <person name="Steele C.L."/>
            <person name="Donaldson J.R."/>
            <person name="Paul D."/>
            <person name="Banes M.M."/>
            <person name="Arick T."/>
            <person name="Bridges S.M."/>
            <person name="Lawrence M.L."/>
        </authorList>
    </citation>
    <scope>NUCLEOTIDE SEQUENCE [LARGE SCALE GENOMIC DNA]</scope>
    <source>
        <strain>HCC23</strain>
    </source>
</reference>
<protein>
    <recommendedName>
        <fullName evidence="1">Lipoprotein signal peptidase</fullName>
        <ecNumber evidence="1">3.4.23.36</ecNumber>
    </recommendedName>
    <alternativeName>
        <fullName evidence="1">Prolipoprotein signal peptidase</fullName>
    </alternativeName>
    <alternativeName>
        <fullName evidence="1">Signal peptidase II</fullName>
        <shortName evidence="1">SPase II</shortName>
    </alternativeName>
</protein>
<sequence length="154" mass="17735">MYYYLITLAVIALDQLTKWIVVQNMEIGQKIEVIPGFLYWTSYRNDGAAWSILEGHMWFFYLITVIVIGIIIYIMQKYAKGKRLFSISLAFILGGAIGNFIDRILHQEVVDFVQTVWGNYYFPIFNVADAALSVGVVLMLVYVFVDDRKTKGIK</sequence>
<proteinExistence type="inferred from homology"/>
<feature type="chain" id="PRO_1000123499" description="Lipoprotein signal peptidase">
    <location>
        <begin position="1"/>
        <end position="154"/>
    </location>
</feature>
<feature type="transmembrane region" description="Helical" evidence="1">
    <location>
        <begin position="55"/>
        <end position="75"/>
    </location>
</feature>
<feature type="transmembrane region" description="Helical" evidence="1">
    <location>
        <begin position="84"/>
        <end position="104"/>
    </location>
</feature>
<feature type="transmembrane region" description="Helical" evidence="1">
    <location>
        <begin position="124"/>
        <end position="144"/>
    </location>
</feature>
<feature type="active site" evidence="1">
    <location>
        <position position="111"/>
    </location>
</feature>
<feature type="active site" evidence="1">
    <location>
        <position position="129"/>
    </location>
</feature>
<accession>B8DDQ9</accession>